<accession>Q1MAF5</accession>
<gene>
    <name evidence="1" type="primary">efp</name>
    <name type="ordered locus">RL4600</name>
</gene>
<sequence>MVKVIASSVRKGNVLDVDGKLYVVLTAQNFHPGKGTPVTQVDMRRIVDGVKVSERWRTTEQVERAFVEDVSFQFLYEDGEGFHFMNPSSYDQVVVDVDTMGDDKAYLQEGMSCILSMHEGIALALQLPRHVTLEIMETEPVVKGQTASSSYKPAILSNGVRAMVPPHINAGTRVVIATEDNSYVERAKD</sequence>
<reference key="1">
    <citation type="journal article" date="2006" name="Genome Biol.">
        <title>The genome of Rhizobium leguminosarum has recognizable core and accessory components.</title>
        <authorList>
            <person name="Young J.P.W."/>
            <person name="Crossman L.C."/>
            <person name="Johnston A.W.B."/>
            <person name="Thomson N.R."/>
            <person name="Ghazoui Z.F."/>
            <person name="Hull K.H."/>
            <person name="Wexler M."/>
            <person name="Curson A.R.J."/>
            <person name="Todd J.D."/>
            <person name="Poole P.S."/>
            <person name="Mauchline T.H."/>
            <person name="East A.K."/>
            <person name="Quail M.A."/>
            <person name="Churcher C."/>
            <person name="Arrowsmith C."/>
            <person name="Cherevach I."/>
            <person name="Chillingworth T."/>
            <person name="Clarke K."/>
            <person name="Cronin A."/>
            <person name="Davis P."/>
            <person name="Fraser A."/>
            <person name="Hance Z."/>
            <person name="Hauser H."/>
            <person name="Jagels K."/>
            <person name="Moule S."/>
            <person name="Mungall K."/>
            <person name="Norbertczak H."/>
            <person name="Rabbinowitsch E."/>
            <person name="Sanders M."/>
            <person name="Simmonds M."/>
            <person name="Whitehead S."/>
            <person name="Parkhill J."/>
        </authorList>
    </citation>
    <scope>NUCLEOTIDE SEQUENCE [LARGE SCALE GENOMIC DNA]</scope>
    <source>
        <strain>DSM 114642 / LMG 32736 / 3841</strain>
    </source>
</reference>
<organism>
    <name type="scientific">Rhizobium johnstonii (strain DSM 114642 / LMG 32736 / 3841)</name>
    <name type="common">Rhizobium leguminosarum bv. viciae</name>
    <dbReference type="NCBI Taxonomy" id="216596"/>
    <lineage>
        <taxon>Bacteria</taxon>
        <taxon>Pseudomonadati</taxon>
        <taxon>Pseudomonadota</taxon>
        <taxon>Alphaproteobacteria</taxon>
        <taxon>Hyphomicrobiales</taxon>
        <taxon>Rhizobiaceae</taxon>
        <taxon>Rhizobium/Agrobacterium group</taxon>
        <taxon>Rhizobium</taxon>
        <taxon>Rhizobium johnstonii</taxon>
    </lineage>
</organism>
<feature type="chain" id="PRO_1000010827" description="Elongation factor P">
    <location>
        <begin position="1"/>
        <end position="189"/>
    </location>
</feature>
<dbReference type="EMBL" id="AM236080">
    <property type="protein sequence ID" value="CAK10083.1"/>
    <property type="molecule type" value="Genomic_DNA"/>
</dbReference>
<dbReference type="RefSeq" id="WP_011653952.1">
    <property type="nucleotide sequence ID" value="NC_008380.1"/>
</dbReference>
<dbReference type="SMR" id="Q1MAF5"/>
<dbReference type="EnsemblBacteria" id="CAK10083">
    <property type="protein sequence ID" value="CAK10083"/>
    <property type="gene ID" value="RL4600"/>
</dbReference>
<dbReference type="KEGG" id="rle:RL4600"/>
<dbReference type="eggNOG" id="COG0231">
    <property type="taxonomic scope" value="Bacteria"/>
</dbReference>
<dbReference type="HOGENOM" id="CLU_074944_1_1_5"/>
<dbReference type="UniPathway" id="UPA00345"/>
<dbReference type="Proteomes" id="UP000006575">
    <property type="component" value="Chromosome"/>
</dbReference>
<dbReference type="GO" id="GO:0005737">
    <property type="term" value="C:cytoplasm"/>
    <property type="evidence" value="ECO:0007669"/>
    <property type="project" value="UniProtKB-SubCell"/>
</dbReference>
<dbReference type="GO" id="GO:0003746">
    <property type="term" value="F:translation elongation factor activity"/>
    <property type="evidence" value="ECO:0007669"/>
    <property type="project" value="UniProtKB-UniRule"/>
</dbReference>
<dbReference type="GO" id="GO:0043043">
    <property type="term" value="P:peptide biosynthetic process"/>
    <property type="evidence" value="ECO:0007669"/>
    <property type="project" value="InterPro"/>
</dbReference>
<dbReference type="CDD" id="cd04470">
    <property type="entry name" value="S1_EF-P_repeat_1"/>
    <property type="match status" value="1"/>
</dbReference>
<dbReference type="CDD" id="cd05794">
    <property type="entry name" value="S1_EF-P_repeat_2"/>
    <property type="match status" value="1"/>
</dbReference>
<dbReference type="FunFam" id="2.40.50.140:FF:000004">
    <property type="entry name" value="Elongation factor P"/>
    <property type="match status" value="1"/>
</dbReference>
<dbReference type="FunFam" id="2.40.50.140:FF:000009">
    <property type="entry name" value="Elongation factor P"/>
    <property type="match status" value="1"/>
</dbReference>
<dbReference type="Gene3D" id="2.30.30.30">
    <property type="match status" value="1"/>
</dbReference>
<dbReference type="Gene3D" id="2.40.50.140">
    <property type="entry name" value="Nucleic acid-binding proteins"/>
    <property type="match status" value="2"/>
</dbReference>
<dbReference type="HAMAP" id="MF_00141">
    <property type="entry name" value="EF_P"/>
    <property type="match status" value="1"/>
</dbReference>
<dbReference type="InterPro" id="IPR015365">
    <property type="entry name" value="Elong-fact-P_C"/>
</dbReference>
<dbReference type="InterPro" id="IPR012340">
    <property type="entry name" value="NA-bd_OB-fold"/>
</dbReference>
<dbReference type="InterPro" id="IPR014722">
    <property type="entry name" value="Rib_uL2_dom2"/>
</dbReference>
<dbReference type="InterPro" id="IPR020599">
    <property type="entry name" value="Transl_elong_fac_P/YeiP"/>
</dbReference>
<dbReference type="InterPro" id="IPR013185">
    <property type="entry name" value="Transl_elong_KOW-like"/>
</dbReference>
<dbReference type="InterPro" id="IPR001059">
    <property type="entry name" value="Transl_elong_P/YeiP_cen"/>
</dbReference>
<dbReference type="InterPro" id="IPR011768">
    <property type="entry name" value="Transl_elongation_fac_P"/>
</dbReference>
<dbReference type="InterPro" id="IPR008991">
    <property type="entry name" value="Translation_prot_SH3-like_sf"/>
</dbReference>
<dbReference type="NCBIfam" id="TIGR00038">
    <property type="entry name" value="efp"/>
    <property type="match status" value="1"/>
</dbReference>
<dbReference type="NCBIfam" id="NF001810">
    <property type="entry name" value="PRK00529.1"/>
    <property type="match status" value="1"/>
</dbReference>
<dbReference type="PANTHER" id="PTHR30053">
    <property type="entry name" value="ELONGATION FACTOR P"/>
    <property type="match status" value="1"/>
</dbReference>
<dbReference type="PANTHER" id="PTHR30053:SF14">
    <property type="entry name" value="TRANSLATION ELONGATION FACTOR KOW-LIKE DOMAIN-CONTAINING PROTEIN"/>
    <property type="match status" value="1"/>
</dbReference>
<dbReference type="Pfam" id="PF01132">
    <property type="entry name" value="EFP"/>
    <property type="match status" value="1"/>
</dbReference>
<dbReference type="Pfam" id="PF08207">
    <property type="entry name" value="EFP_N"/>
    <property type="match status" value="1"/>
</dbReference>
<dbReference type="Pfam" id="PF09285">
    <property type="entry name" value="Elong-fact-P_C"/>
    <property type="match status" value="1"/>
</dbReference>
<dbReference type="PIRSF" id="PIRSF005901">
    <property type="entry name" value="EF-P"/>
    <property type="match status" value="1"/>
</dbReference>
<dbReference type="SMART" id="SM01185">
    <property type="entry name" value="EFP"/>
    <property type="match status" value="1"/>
</dbReference>
<dbReference type="SMART" id="SM00841">
    <property type="entry name" value="Elong-fact-P_C"/>
    <property type="match status" value="1"/>
</dbReference>
<dbReference type="SUPFAM" id="SSF50249">
    <property type="entry name" value="Nucleic acid-binding proteins"/>
    <property type="match status" value="2"/>
</dbReference>
<dbReference type="SUPFAM" id="SSF50104">
    <property type="entry name" value="Translation proteins SH3-like domain"/>
    <property type="match status" value="1"/>
</dbReference>
<proteinExistence type="inferred from homology"/>
<name>EFP_RHIJ3</name>
<keyword id="KW-0963">Cytoplasm</keyword>
<keyword id="KW-0251">Elongation factor</keyword>
<keyword id="KW-0648">Protein biosynthesis</keyword>
<comment type="function">
    <text evidence="1">Involved in peptide bond synthesis. Stimulates efficient translation and peptide-bond synthesis on native or reconstituted 70S ribosomes in vitro. Probably functions indirectly by altering the affinity of the ribosome for aminoacyl-tRNA, thus increasing their reactivity as acceptors for peptidyl transferase.</text>
</comment>
<comment type="pathway">
    <text evidence="1">Protein biosynthesis; polypeptide chain elongation.</text>
</comment>
<comment type="subcellular location">
    <subcellularLocation>
        <location evidence="1">Cytoplasm</location>
    </subcellularLocation>
</comment>
<comment type="similarity">
    <text evidence="1">Belongs to the elongation factor P family.</text>
</comment>
<evidence type="ECO:0000255" key="1">
    <source>
        <dbReference type="HAMAP-Rule" id="MF_00141"/>
    </source>
</evidence>
<protein>
    <recommendedName>
        <fullName evidence="1">Elongation factor P</fullName>
        <shortName evidence="1">EF-P</shortName>
    </recommendedName>
</protein>